<feature type="chain" id="PRO_0000422158" description="Protein gustavus">
    <location>
        <begin position="1"/>
        <end position="279"/>
    </location>
</feature>
<feature type="domain" description="B30.2/SPRY" evidence="2">
    <location>
        <begin position="36"/>
        <end position="233"/>
    </location>
</feature>
<feature type="domain" description="SOCS box" evidence="1">
    <location>
        <begin position="234"/>
        <end position="279"/>
    </location>
</feature>
<feature type="region of interest" description="Involved in binding to the Elongin BC complex" evidence="5">
    <location>
        <begin position="236"/>
        <end position="279"/>
    </location>
</feature>
<feature type="mutagenesis site" description="Does not affect binding to Elongin BC complex. Abolishes interaction with vas." evidence="5">
    <original>Y</original>
    <variation>A</variation>
    <location>
        <position position="131"/>
    </location>
</feature>
<feature type="mutagenesis site" description="Does not affect binding to Elongin BC complex. Abolishes interaction with vas." evidence="5">
    <original>G</original>
    <variation>Y</variation>
    <location>
        <position position="147"/>
    </location>
</feature>
<feature type="mutagenesis site" description="Does not affect binding to Elongin BC complex. Abolishes interaction with vas." evidence="5">
    <original>R</original>
    <variation>W</variation>
    <location>
        <position position="148"/>
    </location>
</feature>
<feature type="mutagenesis site" description="Does not affect binding to Elongin BC complex or vas." evidence="5">
    <original>E</original>
    <variation>A</variation>
    <location>
        <position position="187"/>
    </location>
</feature>
<feature type="mutagenesis site" description="Does not affect binding to Elongin BC complex or vas." evidence="5">
    <original>R</original>
    <variation>S</variation>
    <location>
        <position position="204"/>
    </location>
</feature>
<feature type="mutagenesis site" description="Does not affect binding to Elongin BC complex. Decreases interaction with vas." evidence="5 6 7">
    <original>W</original>
    <variation>L</variation>
    <location>
        <position position="219"/>
    </location>
</feature>
<feature type="helix" evidence="14">
    <location>
        <begin position="37"/>
        <end position="44"/>
    </location>
</feature>
<feature type="helix" evidence="14">
    <location>
        <begin position="50"/>
        <end position="55"/>
    </location>
</feature>
<feature type="strand" evidence="14">
    <location>
        <begin position="57"/>
        <end position="63"/>
    </location>
</feature>
<feature type="strand" evidence="14">
    <location>
        <begin position="67"/>
        <end position="70"/>
    </location>
</feature>
<feature type="strand" evidence="14">
    <location>
        <begin position="73"/>
        <end position="79"/>
    </location>
</feature>
<feature type="strand" evidence="14">
    <location>
        <begin position="85"/>
        <end position="92"/>
    </location>
</feature>
<feature type="strand" evidence="14">
    <location>
        <begin position="97"/>
        <end position="105"/>
    </location>
</feature>
<feature type="helix" evidence="14">
    <location>
        <begin position="108"/>
        <end position="110"/>
    </location>
</feature>
<feature type="strand" evidence="14">
    <location>
        <begin position="116"/>
        <end position="120"/>
    </location>
</feature>
<feature type="strand" evidence="14">
    <location>
        <begin position="126"/>
        <end position="131"/>
    </location>
</feature>
<feature type="strand" evidence="14">
    <location>
        <begin position="141"/>
        <end position="145"/>
    </location>
</feature>
<feature type="turn" evidence="14">
    <location>
        <begin position="146"/>
        <end position="149"/>
    </location>
</feature>
<feature type="strand" evidence="14">
    <location>
        <begin position="150"/>
        <end position="154"/>
    </location>
</feature>
<feature type="turn" evidence="14">
    <location>
        <begin position="155"/>
        <end position="157"/>
    </location>
</feature>
<feature type="strand" evidence="14">
    <location>
        <begin position="161"/>
        <end position="164"/>
    </location>
</feature>
<feature type="strand" evidence="14">
    <location>
        <begin position="177"/>
        <end position="184"/>
    </location>
</feature>
<feature type="turn" evidence="14">
    <location>
        <begin position="185"/>
        <end position="188"/>
    </location>
</feature>
<feature type="strand" evidence="14">
    <location>
        <begin position="189"/>
        <end position="194"/>
    </location>
</feature>
<feature type="strand" evidence="14">
    <location>
        <begin position="197"/>
        <end position="203"/>
    </location>
</feature>
<feature type="strand" evidence="14">
    <location>
        <begin position="211"/>
        <end position="217"/>
    </location>
</feature>
<feature type="strand" evidence="14">
    <location>
        <begin position="223"/>
        <end position="232"/>
    </location>
</feature>
<feature type="helix" evidence="14">
    <location>
        <begin position="239"/>
        <end position="247"/>
    </location>
</feature>
<gene>
    <name type="primary">gus</name>
    <name type="ORF">CG2944</name>
</gene>
<name>GUS_DROME</name>
<sequence length="279" mass="31713">MGQKISGGVKTVSRNDSQSTFKPIIPRELQADFVKPARIDILLDMPPASRDLQLKHSWNSEDRSLNIFVKEDDKLTFHRHPVAQSTDCIRGKVGLTKGLHIWEIYWPTRQRGTHAVVGVCTADAPLHSVGYQSLVGSTEQSWGWDLGRNKLYHDSKNCAGVTYPAILKNDEAFLVPDKFLVALDMDEGTLSFIVDQQYLGIAFRGLRGKKLYPIVSAVWGHCEITMRYIGGLDPEPLPLMDLCRRTIRQKIGRTNLEEHIQQLQLPLSMKTYLLYKNRR</sequence>
<reference evidence="10" key="1">
    <citation type="journal article" date="2000" name="Science">
        <title>The genome sequence of Drosophila melanogaster.</title>
        <authorList>
            <person name="Adams M.D."/>
            <person name="Celniker S.E."/>
            <person name="Holt R.A."/>
            <person name="Evans C.A."/>
            <person name="Gocayne J.D."/>
            <person name="Amanatides P.G."/>
            <person name="Scherer S.E."/>
            <person name="Li P.W."/>
            <person name="Hoskins R.A."/>
            <person name="Galle R.F."/>
            <person name="George R.A."/>
            <person name="Lewis S.E."/>
            <person name="Richards S."/>
            <person name="Ashburner M."/>
            <person name="Henderson S.N."/>
            <person name="Sutton G.G."/>
            <person name="Wortman J.R."/>
            <person name="Yandell M.D."/>
            <person name="Zhang Q."/>
            <person name="Chen L.X."/>
            <person name="Brandon R.C."/>
            <person name="Rogers Y.-H.C."/>
            <person name="Blazej R.G."/>
            <person name="Champe M."/>
            <person name="Pfeiffer B.D."/>
            <person name="Wan K.H."/>
            <person name="Doyle C."/>
            <person name="Baxter E.G."/>
            <person name="Helt G."/>
            <person name="Nelson C.R."/>
            <person name="Miklos G.L.G."/>
            <person name="Abril J.F."/>
            <person name="Agbayani A."/>
            <person name="An H.-J."/>
            <person name="Andrews-Pfannkoch C."/>
            <person name="Baldwin D."/>
            <person name="Ballew R.M."/>
            <person name="Basu A."/>
            <person name="Baxendale J."/>
            <person name="Bayraktaroglu L."/>
            <person name="Beasley E.M."/>
            <person name="Beeson K.Y."/>
            <person name="Benos P.V."/>
            <person name="Berman B.P."/>
            <person name="Bhandari D."/>
            <person name="Bolshakov S."/>
            <person name="Borkova D."/>
            <person name="Botchan M.R."/>
            <person name="Bouck J."/>
            <person name="Brokstein P."/>
            <person name="Brottier P."/>
            <person name="Burtis K.C."/>
            <person name="Busam D.A."/>
            <person name="Butler H."/>
            <person name="Cadieu E."/>
            <person name="Center A."/>
            <person name="Chandra I."/>
            <person name="Cherry J.M."/>
            <person name="Cawley S."/>
            <person name="Dahlke C."/>
            <person name="Davenport L.B."/>
            <person name="Davies P."/>
            <person name="de Pablos B."/>
            <person name="Delcher A."/>
            <person name="Deng Z."/>
            <person name="Mays A.D."/>
            <person name="Dew I."/>
            <person name="Dietz S.M."/>
            <person name="Dodson K."/>
            <person name="Doup L.E."/>
            <person name="Downes M."/>
            <person name="Dugan-Rocha S."/>
            <person name="Dunkov B.C."/>
            <person name="Dunn P."/>
            <person name="Durbin K.J."/>
            <person name="Evangelista C.C."/>
            <person name="Ferraz C."/>
            <person name="Ferriera S."/>
            <person name="Fleischmann W."/>
            <person name="Fosler C."/>
            <person name="Gabrielian A.E."/>
            <person name="Garg N.S."/>
            <person name="Gelbart W.M."/>
            <person name="Glasser K."/>
            <person name="Glodek A."/>
            <person name="Gong F."/>
            <person name="Gorrell J.H."/>
            <person name="Gu Z."/>
            <person name="Guan P."/>
            <person name="Harris M."/>
            <person name="Harris N.L."/>
            <person name="Harvey D.A."/>
            <person name="Heiman T.J."/>
            <person name="Hernandez J.R."/>
            <person name="Houck J."/>
            <person name="Hostin D."/>
            <person name="Houston K.A."/>
            <person name="Howland T.J."/>
            <person name="Wei M.-H."/>
            <person name="Ibegwam C."/>
            <person name="Jalali M."/>
            <person name="Kalush F."/>
            <person name="Karpen G.H."/>
            <person name="Ke Z."/>
            <person name="Kennison J.A."/>
            <person name="Ketchum K.A."/>
            <person name="Kimmel B.E."/>
            <person name="Kodira C.D."/>
            <person name="Kraft C.L."/>
            <person name="Kravitz S."/>
            <person name="Kulp D."/>
            <person name="Lai Z."/>
            <person name="Lasko P."/>
            <person name="Lei Y."/>
            <person name="Levitsky A.A."/>
            <person name="Li J.H."/>
            <person name="Li Z."/>
            <person name="Liang Y."/>
            <person name="Lin X."/>
            <person name="Liu X."/>
            <person name="Mattei B."/>
            <person name="McIntosh T.C."/>
            <person name="McLeod M.P."/>
            <person name="McPherson D."/>
            <person name="Merkulov G."/>
            <person name="Milshina N.V."/>
            <person name="Mobarry C."/>
            <person name="Morris J."/>
            <person name="Moshrefi A."/>
            <person name="Mount S.M."/>
            <person name="Moy M."/>
            <person name="Murphy B."/>
            <person name="Murphy L."/>
            <person name="Muzny D.M."/>
            <person name="Nelson D.L."/>
            <person name="Nelson D.R."/>
            <person name="Nelson K.A."/>
            <person name="Nixon K."/>
            <person name="Nusskern D.R."/>
            <person name="Pacleb J.M."/>
            <person name="Palazzolo M."/>
            <person name="Pittman G.S."/>
            <person name="Pan S."/>
            <person name="Pollard J."/>
            <person name="Puri V."/>
            <person name="Reese M.G."/>
            <person name="Reinert K."/>
            <person name="Remington K."/>
            <person name="Saunders R.D.C."/>
            <person name="Scheeler F."/>
            <person name="Shen H."/>
            <person name="Shue B.C."/>
            <person name="Siden-Kiamos I."/>
            <person name="Simpson M."/>
            <person name="Skupski M.P."/>
            <person name="Smith T.J."/>
            <person name="Spier E."/>
            <person name="Spradling A.C."/>
            <person name="Stapleton M."/>
            <person name="Strong R."/>
            <person name="Sun E."/>
            <person name="Svirskas R."/>
            <person name="Tector C."/>
            <person name="Turner R."/>
            <person name="Venter E."/>
            <person name="Wang A.H."/>
            <person name="Wang X."/>
            <person name="Wang Z.-Y."/>
            <person name="Wassarman D.A."/>
            <person name="Weinstock G.M."/>
            <person name="Weissenbach J."/>
            <person name="Williams S.M."/>
            <person name="Woodage T."/>
            <person name="Worley K.C."/>
            <person name="Wu D."/>
            <person name="Yang S."/>
            <person name="Yao Q.A."/>
            <person name="Ye J."/>
            <person name="Yeh R.-F."/>
            <person name="Zaveri J.S."/>
            <person name="Zhan M."/>
            <person name="Zhang G."/>
            <person name="Zhao Q."/>
            <person name="Zheng L."/>
            <person name="Zheng X.H."/>
            <person name="Zhong F.N."/>
            <person name="Zhong W."/>
            <person name="Zhou X."/>
            <person name="Zhu S.C."/>
            <person name="Zhu X."/>
            <person name="Smith H.O."/>
            <person name="Gibbs R.A."/>
            <person name="Myers E.W."/>
            <person name="Rubin G.M."/>
            <person name="Venter J.C."/>
        </authorList>
    </citation>
    <scope>NUCLEOTIDE SEQUENCE [LARGE SCALE GENOMIC DNA]</scope>
    <source>
        <strain>Berkeley</strain>
    </source>
</reference>
<reference evidence="10" key="2">
    <citation type="journal article" date="2002" name="Genome Biol.">
        <title>Annotation of the Drosophila melanogaster euchromatic genome: a systematic review.</title>
        <authorList>
            <person name="Misra S."/>
            <person name="Crosby M.A."/>
            <person name="Mungall C.J."/>
            <person name="Matthews B.B."/>
            <person name="Campbell K.S."/>
            <person name="Hradecky P."/>
            <person name="Huang Y."/>
            <person name="Kaminker J.S."/>
            <person name="Millburn G.H."/>
            <person name="Prochnik S.E."/>
            <person name="Smith C.D."/>
            <person name="Tupy J.L."/>
            <person name="Whitfield E.J."/>
            <person name="Bayraktaroglu L."/>
            <person name="Berman B.P."/>
            <person name="Bettencourt B.R."/>
            <person name="Celniker S.E."/>
            <person name="de Grey A.D.N.J."/>
            <person name="Drysdale R.A."/>
            <person name="Harris N.L."/>
            <person name="Richter J."/>
            <person name="Russo S."/>
            <person name="Schroeder A.J."/>
            <person name="Shu S.Q."/>
            <person name="Stapleton M."/>
            <person name="Yamada C."/>
            <person name="Ashburner M."/>
            <person name="Gelbart W.M."/>
            <person name="Rubin G.M."/>
            <person name="Lewis S.E."/>
        </authorList>
    </citation>
    <scope>GENOME REANNOTATION</scope>
    <source>
        <strain>Berkeley</strain>
    </source>
</reference>
<reference evidence="9" key="3">
    <citation type="journal article" date="2002" name="Genome Biol.">
        <title>A Drosophila full-length cDNA resource.</title>
        <authorList>
            <person name="Stapleton M."/>
            <person name="Carlson J.W."/>
            <person name="Brokstein P."/>
            <person name="Yu C."/>
            <person name="Champe M."/>
            <person name="George R.A."/>
            <person name="Guarin H."/>
            <person name="Kronmiller B."/>
            <person name="Pacleb J.M."/>
            <person name="Park S."/>
            <person name="Wan K.H."/>
            <person name="Rubin G.M."/>
            <person name="Celniker S.E."/>
        </authorList>
    </citation>
    <scope>NUCLEOTIDE SEQUENCE [LARGE SCALE MRNA]</scope>
    <source>
        <strain evidence="4">Berkeley</strain>
        <tissue evidence="4">Embryo</tissue>
    </source>
</reference>
<reference evidence="11" key="4">
    <citation type="submission" date="2009-08" db="EMBL/GenBank/DDBJ databases">
        <authorList>
            <person name="Carlson J."/>
            <person name="Booth B."/>
            <person name="Frise E."/>
            <person name="Park S."/>
            <person name="Wan K."/>
            <person name="Yu C."/>
            <person name="Celniker S."/>
        </authorList>
    </citation>
    <scope>NUCLEOTIDE SEQUENCE [MRNA]</scope>
    <source>
        <strain evidence="11">Berkeley</strain>
        <tissue>Embryo</tissue>
    </source>
</reference>
<reference evidence="8" key="5">
    <citation type="journal article" date="2002" name="Dev. Cell">
        <title>VASA localization requires the SPRY-domain and SOCS-box containing protein, GUSTAVUS.</title>
        <authorList>
            <person name="Styhler S."/>
            <person name="Nakamura A."/>
            <person name="Lasko P."/>
        </authorList>
    </citation>
    <scope>FUNCTION</scope>
    <scope>INTERACTION WITH VAS</scope>
    <scope>SUBCELLULAR LOCATION</scope>
    <scope>TISSUE SPECIFICITY</scope>
    <scope>DEVELOPMENTAL STAGE</scope>
</reference>
<reference evidence="8" key="6">
    <citation type="journal article" date="2010" name="Mol. Cell. Biol.">
        <title>Regulation of Drosophila vasa in vivo through paralogous cullin-RING E3 ligase specificity receptors.</title>
        <authorList>
            <person name="Kugler J.M."/>
            <person name="Woo J.S."/>
            <person name="Oh B.H."/>
            <person name="Lasko P."/>
        </authorList>
    </citation>
    <scope>FUNCTION</scope>
    <scope>INTERACTION WITH VAS AND CUL-5</scope>
    <scope>SUBCELLULAR LOCATION</scope>
    <scope>TISSUE SPECIFICITY</scope>
    <scope>DEVELOPMENTAL STAGE</scope>
    <scope>DISRUPTION PHENOTYPE</scope>
    <scope>MUTAGENESIS OF TRP-219</scope>
</reference>
<reference evidence="8 12" key="7">
    <citation type="journal article" date="2006" name="EMBO J.">
        <title>Structural and functional insights into the B30.2/SPRY domain.</title>
        <authorList>
            <person name="Woo J.S."/>
            <person name="Imm J.H."/>
            <person name="Min C.K."/>
            <person name="Kim K.J."/>
            <person name="Cha S.S."/>
            <person name="Oh B.H."/>
        </authorList>
    </citation>
    <scope>X-RAY CRYSTALLOGRAPHY (1.80 ANGSTROMS) OF 27-251 IN COMPLEX WITH MOUSE ELONGIN-B AND ELONGIN-C</scope>
    <scope>INTERACTION WITH VAS</scope>
    <scope>MUTAGENESIS OF TYR-131; GLY-147; ARG-148; GLU-187; ARG-204 AND TRP-219</scope>
</reference>
<reference evidence="8 13" key="8">
    <citation type="journal article" date="2006" name="Mol. Cell">
        <title>Structural basis for protein recognition by B30.2/SPRY domains.</title>
        <authorList>
            <person name="Woo J.S."/>
            <person name="Suh H.Y."/>
            <person name="Park S.Y."/>
            <person name="Oh B.H."/>
        </authorList>
    </citation>
    <scope>X-RAY CRYSTALLOGRAPHY (2.20 ANGSTROMS) OF 27-232 IN COMPLEX WITH VAS FRAGMENT</scope>
    <scope>MUTAGENESIS OF TRP-219</scope>
</reference>
<protein>
    <recommendedName>
        <fullName evidence="10">Protein gustavus</fullName>
    </recommendedName>
</protein>
<organism>
    <name type="scientific">Drosophila melanogaster</name>
    <name type="common">Fruit fly</name>
    <dbReference type="NCBI Taxonomy" id="7227"/>
    <lineage>
        <taxon>Eukaryota</taxon>
        <taxon>Metazoa</taxon>
        <taxon>Ecdysozoa</taxon>
        <taxon>Arthropoda</taxon>
        <taxon>Hexapoda</taxon>
        <taxon>Insecta</taxon>
        <taxon>Pterygota</taxon>
        <taxon>Neoptera</taxon>
        <taxon>Endopterygota</taxon>
        <taxon>Diptera</taxon>
        <taxon>Brachycera</taxon>
        <taxon>Muscomorpha</taxon>
        <taxon>Ephydroidea</taxon>
        <taxon>Drosophilidae</taxon>
        <taxon>Drosophila</taxon>
        <taxon>Sophophora</taxon>
    </lineage>
</organism>
<dbReference type="EMBL" id="AE013599">
    <property type="protein sequence ID" value="AAF57346.2"/>
    <property type="molecule type" value="Genomic_DNA"/>
</dbReference>
<dbReference type="EMBL" id="AE013599">
    <property type="protein sequence ID" value="AAF57347.3"/>
    <property type="molecule type" value="Genomic_DNA"/>
</dbReference>
<dbReference type="EMBL" id="AE013599">
    <property type="protein sequence ID" value="AAG22337.2"/>
    <property type="molecule type" value="Genomic_DNA"/>
</dbReference>
<dbReference type="EMBL" id="AE013599">
    <property type="protein sequence ID" value="AAM68372.1"/>
    <property type="molecule type" value="Genomic_DNA"/>
</dbReference>
<dbReference type="EMBL" id="AE013599">
    <property type="protein sequence ID" value="AAM68373.2"/>
    <property type="molecule type" value="Genomic_DNA"/>
</dbReference>
<dbReference type="EMBL" id="AE013599">
    <property type="protein sequence ID" value="AAM68374.2"/>
    <property type="molecule type" value="Genomic_DNA"/>
</dbReference>
<dbReference type="EMBL" id="AY119609">
    <property type="protein sequence ID" value="AAM50263.1"/>
    <property type="status" value="ALT_INIT"/>
    <property type="molecule type" value="mRNA"/>
</dbReference>
<dbReference type="EMBL" id="BT089043">
    <property type="protein sequence ID" value="ACU12389.1"/>
    <property type="status" value="ALT_INIT"/>
    <property type="molecule type" value="mRNA"/>
</dbReference>
<dbReference type="EMBL" id="BT099916">
    <property type="protein sequence ID" value="ACX32987.1"/>
    <property type="status" value="ALT_INIT"/>
    <property type="molecule type" value="mRNA"/>
</dbReference>
<dbReference type="EMBL" id="BT126146">
    <property type="protein sequence ID" value="ADZ74173.1"/>
    <property type="status" value="ALT_SEQ"/>
    <property type="molecule type" value="mRNA"/>
</dbReference>
<dbReference type="RefSeq" id="NP_001246140.1">
    <property type="nucleotide sequence ID" value="NM_001259211.2"/>
</dbReference>
<dbReference type="RefSeq" id="NP_610158.3">
    <property type="nucleotide sequence ID" value="NM_136314.4"/>
</dbReference>
<dbReference type="RefSeq" id="NP_724398.2">
    <property type="nucleotide sequence ID" value="NM_165418.3"/>
</dbReference>
<dbReference type="RefSeq" id="NP_724399.2">
    <property type="nucleotide sequence ID" value="NM_165419.3"/>
</dbReference>
<dbReference type="RefSeq" id="NP_724400.2">
    <property type="nucleotide sequence ID" value="NM_165420.3"/>
</dbReference>
<dbReference type="RefSeq" id="NP_724401.2">
    <property type="nucleotide sequence ID" value="NM_165421.3"/>
</dbReference>
<dbReference type="RefSeq" id="NP_724402.2">
    <property type="nucleotide sequence ID" value="NM_165422.3"/>
</dbReference>
<dbReference type="PDB" id="2FNJ">
    <property type="method" value="X-ray"/>
    <property type="resolution" value="1.80 A"/>
    <property type="chains" value="A=27-251"/>
</dbReference>
<dbReference type="PDB" id="2IHS">
    <property type="method" value="X-ray"/>
    <property type="resolution" value="2.20 A"/>
    <property type="chains" value="A/B=27-232"/>
</dbReference>
<dbReference type="PDBsum" id="2FNJ"/>
<dbReference type="PDBsum" id="2IHS"/>
<dbReference type="SMR" id="A1Z6E0"/>
<dbReference type="BioGRID" id="61396">
    <property type="interactions" value="53"/>
</dbReference>
<dbReference type="FunCoup" id="A1Z6E0">
    <property type="interactions" value="131"/>
</dbReference>
<dbReference type="IntAct" id="A1Z6E0">
    <property type="interactions" value="36"/>
</dbReference>
<dbReference type="MINT" id="A1Z6E0"/>
<dbReference type="STRING" id="7227.FBpp0301582"/>
<dbReference type="PaxDb" id="7227-FBpp0301582"/>
<dbReference type="DNASU" id="35478"/>
<dbReference type="EnsemblMetazoa" id="FBtr0309846">
    <property type="protein sequence ID" value="FBpp0301580"/>
    <property type="gene ID" value="FBgn0026238"/>
</dbReference>
<dbReference type="EnsemblMetazoa" id="FBtr0309847">
    <property type="protein sequence ID" value="FBpp0301581"/>
    <property type="gene ID" value="FBgn0026238"/>
</dbReference>
<dbReference type="EnsemblMetazoa" id="FBtr0309848">
    <property type="protein sequence ID" value="FBpp0301582"/>
    <property type="gene ID" value="FBgn0026238"/>
</dbReference>
<dbReference type="EnsemblMetazoa" id="FBtr0309849">
    <property type="protein sequence ID" value="FBpp0301583"/>
    <property type="gene ID" value="FBgn0026238"/>
</dbReference>
<dbReference type="EnsemblMetazoa" id="FBtr0309850">
    <property type="protein sequence ID" value="FBpp0301584"/>
    <property type="gene ID" value="FBgn0026238"/>
</dbReference>
<dbReference type="EnsemblMetazoa" id="FBtr0309851">
    <property type="protein sequence ID" value="FBpp0301585"/>
    <property type="gene ID" value="FBgn0026238"/>
</dbReference>
<dbReference type="EnsemblMetazoa" id="FBtr0309852">
    <property type="protein sequence ID" value="FBpp0301586"/>
    <property type="gene ID" value="FBgn0026238"/>
</dbReference>
<dbReference type="GeneID" id="35478"/>
<dbReference type="KEGG" id="dme:Dmel_CG2944"/>
<dbReference type="UCSC" id="CG2944-RA">
    <property type="organism name" value="d. melanogaster"/>
</dbReference>
<dbReference type="UCSC" id="CG2944-RB">
    <property type="organism name" value="d. melanogaster"/>
</dbReference>
<dbReference type="UCSC" id="CG2944-RD">
    <property type="organism name" value="d. melanogaster"/>
</dbReference>
<dbReference type="UCSC" id="CG2944-RE">
    <property type="organism name" value="d. melanogaster"/>
</dbReference>
<dbReference type="UCSC" id="CG2944-RF">
    <property type="organism name" value="d. melanogaster"/>
</dbReference>
<dbReference type="AGR" id="FB:FBgn0026238"/>
<dbReference type="CTD" id="35478"/>
<dbReference type="FlyBase" id="FBgn0026238">
    <property type="gene designation" value="gus"/>
</dbReference>
<dbReference type="VEuPathDB" id="VectorBase:FBgn0026238"/>
<dbReference type="eggNOG" id="KOG3953">
    <property type="taxonomic scope" value="Eukaryota"/>
</dbReference>
<dbReference type="GeneTree" id="ENSGT01030000234629"/>
<dbReference type="HOGENOM" id="CLU_046756_0_1_1"/>
<dbReference type="InParanoid" id="A1Z6E0"/>
<dbReference type="OMA" id="HRPMAKE"/>
<dbReference type="OrthoDB" id="5547302at2759"/>
<dbReference type="PhylomeDB" id="A1Z6E0"/>
<dbReference type="Reactome" id="R-DME-8951664">
    <property type="pathway name" value="Neddylation"/>
</dbReference>
<dbReference type="Reactome" id="R-DME-983168">
    <property type="pathway name" value="Antigen processing: Ubiquitination &amp; Proteasome degradation"/>
</dbReference>
<dbReference type="SignaLink" id="A1Z6E0"/>
<dbReference type="BioGRID-ORCS" id="35478">
    <property type="hits" value="0 hits in 3 CRISPR screens"/>
</dbReference>
<dbReference type="CD-CODE" id="19A54EA0">
    <property type="entry name" value="Sponge body"/>
</dbReference>
<dbReference type="EvolutionaryTrace" id="A1Z6E0"/>
<dbReference type="GenomeRNAi" id="35478"/>
<dbReference type="PRO" id="PR:A1Z6E0"/>
<dbReference type="Proteomes" id="UP000000803">
    <property type="component" value="Chromosome 2R"/>
</dbReference>
<dbReference type="Bgee" id="FBgn0026238">
    <property type="expression patterns" value="Expressed in cleaving embryo and 281 other cell types or tissues"/>
</dbReference>
<dbReference type="ExpressionAtlas" id="A1Z6E0">
    <property type="expression patterns" value="baseline and differential"/>
</dbReference>
<dbReference type="GO" id="GO:0005938">
    <property type="term" value="C:cell cortex"/>
    <property type="evidence" value="ECO:0000314"/>
    <property type="project" value="UniProtKB"/>
</dbReference>
<dbReference type="GO" id="GO:0031466">
    <property type="term" value="C:Cul5-RING ubiquitin ligase complex"/>
    <property type="evidence" value="ECO:0000314"/>
    <property type="project" value="FlyBase"/>
</dbReference>
<dbReference type="GO" id="GO:0005737">
    <property type="term" value="C:cytoplasm"/>
    <property type="evidence" value="ECO:0000314"/>
    <property type="project" value="UniProtKB"/>
</dbReference>
<dbReference type="GO" id="GO:0070449">
    <property type="term" value="C:elongin complex"/>
    <property type="evidence" value="ECO:0000314"/>
    <property type="project" value="UniProtKB"/>
</dbReference>
<dbReference type="GO" id="GO:0005634">
    <property type="term" value="C:nucleus"/>
    <property type="evidence" value="ECO:0000314"/>
    <property type="project" value="UniProtKB"/>
</dbReference>
<dbReference type="GO" id="GO:0048471">
    <property type="term" value="C:perinuclear region of cytoplasm"/>
    <property type="evidence" value="ECO:0000314"/>
    <property type="project" value="UniProtKB"/>
</dbReference>
<dbReference type="GO" id="GO:0045495">
    <property type="term" value="C:pole plasm"/>
    <property type="evidence" value="ECO:0000314"/>
    <property type="project" value="UniProtKB"/>
</dbReference>
<dbReference type="GO" id="GO:0019005">
    <property type="term" value="C:SCF ubiquitin ligase complex"/>
    <property type="evidence" value="ECO:0000318"/>
    <property type="project" value="GO_Central"/>
</dbReference>
<dbReference type="GO" id="GO:0035017">
    <property type="term" value="P:cuticle pattern formation"/>
    <property type="evidence" value="ECO:0000315"/>
    <property type="project" value="UniProtKB"/>
</dbReference>
<dbReference type="GO" id="GO:0046843">
    <property type="term" value="P:dorsal appendage formation"/>
    <property type="evidence" value="ECO:0000315"/>
    <property type="project" value="FlyBase"/>
</dbReference>
<dbReference type="GO" id="GO:0007281">
    <property type="term" value="P:germ cell development"/>
    <property type="evidence" value="ECO:0000315"/>
    <property type="project" value="UniProtKB"/>
</dbReference>
<dbReference type="GO" id="GO:0008354">
    <property type="term" value="P:germ cell migration"/>
    <property type="evidence" value="ECO:0000315"/>
    <property type="project" value="UniProtKB"/>
</dbReference>
<dbReference type="GO" id="GO:0035556">
    <property type="term" value="P:intracellular signal transduction"/>
    <property type="evidence" value="ECO:0007669"/>
    <property type="project" value="InterPro"/>
</dbReference>
<dbReference type="GO" id="GO:0007314">
    <property type="term" value="P:oocyte anterior/posterior axis specification"/>
    <property type="evidence" value="ECO:0000315"/>
    <property type="project" value="FlyBase"/>
</dbReference>
<dbReference type="GO" id="GO:0007315">
    <property type="term" value="P:pole plasm assembly"/>
    <property type="evidence" value="ECO:0000315"/>
    <property type="project" value="UniProtKB"/>
</dbReference>
<dbReference type="GO" id="GO:0045732">
    <property type="term" value="P:positive regulation of protein catabolic process"/>
    <property type="evidence" value="ECO:0000315"/>
    <property type="project" value="FlyBase"/>
</dbReference>
<dbReference type="GO" id="GO:0043161">
    <property type="term" value="P:proteasome-mediated ubiquitin-dependent protein catabolic process"/>
    <property type="evidence" value="ECO:0000318"/>
    <property type="project" value="GO_Central"/>
</dbReference>
<dbReference type="GO" id="GO:0008104">
    <property type="term" value="P:protein localization"/>
    <property type="evidence" value="ECO:0000315"/>
    <property type="project" value="UniProtKB"/>
</dbReference>
<dbReference type="GO" id="GO:0007472">
    <property type="term" value="P:wing disc morphogenesis"/>
    <property type="evidence" value="ECO:0000315"/>
    <property type="project" value="UniProtKB"/>
</dbReference>
<dbReference type="CDD" id="cd03718">
    <property type="entry name" value="SOCS_SSB1_4"/>
    <property type="match status" value="1"/>
</dbReference>
<dbReference type="CDD" id="cd12906">
    <property type="entry name" value="SPRY_SOCS1-2-4"/>
    <property type="match status" value="1"/>
</dbReference>
<dbReference type="FunFam" id="1.10.750.20:FF:000001">
    <property type="entry name" value="Ankyrin repeat and SOCS box containing 1"/>
    <property type="match status" value="1"/>
</dbReference>
<dbReference type="FunFam" id="2.60.120.920:FF:000007">
    <property type="entry name" value="SPRY domain-containing SOCS box protein 1"/>
    <property type="match status" value="1"/>
</dbReference>
<dbReference type="Gene3D" id="2.60.120.920">
    <property type="match status" value="1"/>
</dbReference>
<dbReference type="Gene3D" id="1.10.750.20">
    <property type="entry name" value="SOCS box"/>
    <property type="match status" value="1"/>
</dbReference>
<dbReference type="InterPro" id="IPR001870">
    <property type="entry name" value="B30.2/SPRY"/>
</dbReference>
<dbReference type="InterPro" id="IPR043136">
    <property type="entry name" value="B30.2/SPRY_sf"/>
</dbReference>
<dbReference type="InterPro" id="IPR013320">
    <property type="entry name" value="ConA-like_dom_sf"/>
</dbReference>
<dbReference type="InterPro" id="IPR050672">
    <property type="entry name" value="FBXO45-Fsn/SPSB_families"/>
</dbReference>
<dbReference type="InterPro" id="IPR001496">
    <property type="entry name" value="SOCS_box"/>
</dbReference>
<dbReference type="InterPro" id="IPR036036">
    <property type="entry name" value="SOCS_box-like_dom_sf"/>
</dbReference>
<dbReference type="InterPro" id="IPR003877">
    <property type="entry name" value="SPRY_dom"/>
</dbReference>
<dbReference type="PANTHER" id="PTHR12245:SF11">
    <property type="entry name" value="PROTEIN GUSTAVUS"/>
    <property type="match status" value="1"/>
</dbReference>
<dbReference type="PANTHER" id="PTHR12245">
    <property type="entry name" value="SPRY DOMAIN CONTAINING SOCS BOX PROTEIN"/>
    <property type="match status" value="1"/>
</dbReference>
<dbReference type="Pfam" id="PF07525">
    <property type="entry name" value="SOCS_box"/>
    <property type="match status" value="1"/>
</dbReference>
<dbReference type="Pfam" id="PF00622">
    <property type="entry name" value="SPRY"/>
    <property type="match status" value="1"/>
</dbReference>
<dbReference type="SMART" id="SM00969">
    <property type="entry name" value="SOCS_box"/>
    <property type="match status" value="1"/>
</dbReference>
<dbReference type="SMART" id="SM00449">
    <property type="entry name" value="SPRY"/>
    <property type="match status" value="1"/>
</dbReference>
<dbReference type="SUPFAM" id="SSF49899">
    <property type="entry name" value="Concanavalin A-like lectins/glucanases"/>
    <property type="match status" value="1"/>
</dbReference>
<dbReference type="SUPFAM" id="SSF158235">
    <property type="entry name" value="SOCS box-like"/>
    <property type="match status" value="1"/>
</dbReference>
<dbReference type="PROSITE" id="PS50188">
    <property type="entry name" value="B302_SPRY"/>
    <property type="match status" value="1"/>
</dbReference>
<dbReference type="PROSITE" id="PS50225">
    <property type="entry name" value="SOCS"/>
    <property type="match status" value="1"/>
</dbReference>
<proteinExistence type="evidence at protein level"/>
<evidence type="ECO:0000255" key="1">
    <source>
        <dbReference type="PROSITE-ProRule" id="PRU00194"/>
    </source>
</evidence>
<evidence type="ECO:0000255" key="2">
    <source>
        <dbReference type="PROSITE-ProRule" id="PRU00548"/>
    </source>
</evidence>
<evidence type="ECO:0000269" key="3">
    <source>
    </source>
</evidence>
<evidence type="ECO:0000269" key="4">
    <source>
    </source>
</evidence>
<evidence type="ECO:0000269" key="5">
    <source>
    </source>
</evidence>
<evidence type="ECO:0000269" key="6">
    <source>
    </source>
</evidence>
<evidence type="ECO:0000269" key="7">
    <source>
    </source>
</evidence>
<evidence type="ECO:0000305" key="8"/>
<evidence type="ECO:0000312" key="9">
    <source>
        <dbReference type="EMBL" id="AAM50263.1"/>
    </source>
</evidence>
<evidence type="ECO:0000312" key="10">
    <source>
        <dbReference type="EMBL" id="AAM68373.2"/>
    </source>
</evidence>
<evidence type="ECO:0000312" key="11">
    <source>
        <dbReference type="EMBL" id="ADZ74173.1"/>
    </source>
</evidence>
<evidence type="ECO:0000312" key="12">
    <source>
        <dbReference type="PDB" id="2FNJ"/>
    </source>
</evidence>
<evidence type="ECO:0000312" key="13">
    <source>
        <dbReference type="PDB" id="2IHS"/>
    </source>
</evidence>
<evidence type="ECO:0007829" key="14">
    <source>
        <dbReference type="PDB" id="2FNJ"/>
    </source>
</evidence>
<comment type="function">
    <text evidence="3 7">Involved in the localization of vas to the posterior pole of the oocyte. Required maternally in the germ line for efficient primordial germ cell formation.</text>
</comment>
<comment type="subunit">
    <text evidence="3 5 6 7">Interacts (via B30.2/SPRY domain) with vas; this interaction may be necessary for the transport of vas to the posterior pole of the oocyte. Interacts with Cul-5. May associate with the Elongin BC complex composed of Elongin-B and Elongin-C.</text>
</comment>
<comment type="interaction">
    <interactant intactId="EBI-75338">
        <id>A1Z6E0</id>
    </interactant>
    <interactant intactId="EBI-74922">
        <id>O96757</id>
        <label>stumps</label>
    </interactant>
    <organismsDiffer>false</organismsDiffer>
    <experiments>3</experiments>
</comment>
<comment type="interaction">
    <interactant intactId="EBI-75338">
        <id>A1Z6E0</id>
    </interactant>
    <interactant intactId="EBI-134067">
        <id>P09052</id>
        <label>vas</label>
    </interactant>
    <organismsDiffer>false</organismsDiffer>
    <experiments>5</experiments>
</comment>
<comment type="subcellular location">
    <subcellularLocation>
        <location evidence="3 7">Cytoplasm</location>
    </subcellularLocation>
    <subcellularLocation>
        <location evidence="3 7">Nucleus</location>
    </subcellularLocation>
    <text evidence="3 7">Component of the cytoplasmic ribonucleoprotein (RNP) bodies which concentrate at the perinuclear region of the nurse cell and in punctate aggregates throughout the cytoplasm. Some cortical enrichment of these aggregates is also observed. At stage 7, accumulates in the anterior cytoplasm of the oocyte, whereas during stage 10 accumulates at the posterior pole. This posterior distribution is not maintained in later developmental stages.</text>
</comment>
<comment type="tissue specificity">
    <text evidence="3 7">Expressed in ovaries, primarily in nurse cells and oocytes (at protein level).</text>
</comment>
<comment type="developmental stage">
    <text evidence="3 7">Expressed during oogenesis, in early embryos (0 to 4 hours) and in fertile adult females (at protein level).</text>
</comment>
<comment type="disruption phenotype">
    <text evidence="7">Homozygous females produce defective eggs, which desiccate and collapse soon after egg laying, or embryos, which hatch very rarely. Mutants exhibit wing morphology defects, including blistering, formation of ectopic vein material, and loss of material at the margin.</text>
</comment>
<comment type="similarity">
    <text evidence="8">Belongs to the SPSB family.</text>
</comment>
<comment type="sequence caution" evidence="8">
    <conflict type="erroneous initiation">
        <sequence resource="EMBL-CDS" id="AAM50263"/>
    </conflict>
    <text>Extended N-terminus.</text>
</comment>
<comment type="sequence caution" evidence="8">
    <conflict type="erroneous initiation">
        <sequence resource="EMBL-CDS" id="ACU12389"/>
    </conflict>
    <text>Extended N-terminus.</text>
</comment>
<comment type="sequence caution" evidence="8">
    <conflict type="erroneous initiation">
        <sequence resource="EMBL-CDS" id="ACX32987"/>
    </conflict>
    <text>Extended N-terminus.</text>
</comment>
<comment type="sequence caution" evidence="8">
    <conflict type="erroneous initiation">
        <sequence resource="EMBL-CDS" id="ADZ74173"/>
    </conflict>
    <text>Extended N-terminus.</text>
</comment>
<comment type="sequence caution" evidence="8">
    <conflict type="frameshift">
        <sequence resource="EMBL-CDS" id="ADZ74173"/>
    </conflict>
</comment>
<keyword id="KW-0002">3D-structure</keyword>
<keyword id="KW-0963">Cytoplasm</keyword>
<keyword id="KW-0217">Developmental protein</keyword>
<keyword id="KW-0539">Nucleus</keyword>
<keyword id="KW-1185">Reference proteome</keyword>
<accession>A1Z6E0</accession>
<accession>A1Z6D7</accession>
<accession>A1Z6D9</accession>
<accession>A1Z6E2</accession>
<accession>F2FB59</accession>
<accession>Q7JUY1</accession>